<evidence type="ECO:0000255" key="1">
    <source>
        <dbReference type="HAMAP-Rule" id="MF_00469"/>
    </source>
</evidence>
<evidence type="ECO:0000305" key="2"/>
<protein>
    <recommendedName>
        <fullName evidence="1">tRNA uridine(34) hydroxylase</fullName>
        <ecNumber evidence="1">1.14.-.-</ecNumber>
    </recommendedName>
    <alternativeName>
        <fullName evidence="1">tRNA hydroxylation protein O</fullName>
    </alternativeName>
</protein>
<reference key="1">
    <citation type="journal article" date="2004" name="Proc. Natl. Acad. Sci. U.S.A.">
        <title>Genome sequence of the enterobacterial phytopathogen Erwinia carotovora subsp. atroseptica and characterization of virulence factors.</title>
        <authorList>
            <person name="Bell K.S."/>
            <person name="Sebaihia M."/>
            <person name="Pritchard L."/>
            <person name="Holden M.T.G."/>
            <person name="Hyman L.J."/>
            <person name="Holeva M.C."/>
            <person name="Thomson N.R."/>
            <person name="Bentley S.D."/>
            <person name="Churcher L.J.C."/>
            <person name="Mungall K."/>
            <person name="Atkin R."/>
            <person name="Bason N."/>
            <person name="Brooks K."/>
            <person name="Chillingworth T."/>
            <person name="Clark K."/>
            <person name="Doggett J."/>
            <person name="Fraser A."/>
            <person name="Hance Z."/>
            <person name="Hauser H."/>
            <person name="Jagels K."/>
            <person name="Moule S."/>
            <person name="Norbertczak H."/>
            <person name="Ormond D."/>
            <person name="Price C."/>
            <person name="Quail M.A."/>
            <person name="Sanders M."/>
            <person name="Walker D."/>
            <person name="Whitehead S."/>
            <person name="Salmond G.P.C."/>
            <person name="Birch P.R.J."/>
            <person name="Parkhill J."/>
            <person name="Toth I.K."/>
        </authorList>
    </citation>
    <scope>NUCLEOTIDE SEQUENCE [LARGE SCALE GENOMIC DNA]</scope>
    <source>
        <strain>SCRI 1043 / ATCC BAA-672</strain>
    </source>
</reference>
<keyword id="KW-0560">Oxidoreductase</keyword>
<keyword id="KW-1185">Reference proteome</keyword>
<keyword id="KW-0819">tRNA processing</keyword>
<sequence length="355" mass="40307">MPVLHNRVSNEELKARMLAETEPRTTVSFYKYFTIDDPKAFRDRLYIQLEQYKVFGRIYIAAEGINAQISVPNNQFDAFKTGLFSAHPALDQIRLNIALEDDGKSFWVLRMKVRERIVADGIDDPTFNPANVGQYLKADRVNAMADDPDTVFVDMRNHYEYEVGHFQNALEVPSDTFREQLPMAVDMLDDIRDKNIVMYCTGGIRCEKASAYMLHHGFKNVYHVEGGIIEYARQAKAQGLPLKFIGKNFVFDERMGERISDDVIAHCHQCGASCDSHTNCRNEGCHLLFIQCPSCAAKYEGCCSTQCQDEMKLPLEEQRAIRSGRENGMKIFNKSKGLLQSTLHIPAPAAKDNAE</sequence>
<comment type="function">
    <text evidence="1">Catalyzes oxygen-dependent 5-hydroxyuridine (ho5U) modification at position 34 in tRNAs.</text>
</comment>
<comment type="catalytic activity">
    <reaction evidence="1">
        <text>uridine(34) in tRNA + AH2 + O2 = 5-hydroxyuridine(34) in tRNA + A + H2O</text>
        <dbReference type="Rhea" id="RHEA:64224"/>
        <dbReference type="Rhea" id="RHEA-COMP:11727"/>
        <dbReference type="Rhea" id="RHEA-COMP:13381"/>
        <dbReference type="ChEBI" id="CHEBI:13193"/>
        <dbReference type="ChEBI" id="CHEBI:15377"/>
        <dbReference type="ChEBI" id="CHEBI:15379"/>
        <dbReference type="ChEBI" id="CHEBI:17499"/>
        <dbReference type="ChEBI" id="CHEBI:65315"/>
        <dbReference type="ChEBI" id="CHEBI:136877"/>
    </reaction>
</comment>
<comment type="similarity">
    <text evidence="1">Belongs to the TrhO family.</text>
</comment>
<comment type="sequence caution" evidence="2">
    <conflict type="erroneous initiation">
        <sequence resource="EMBL-CDS" id="CAG74686"/>
    </conflict>
</comment>
<organism>
    <name type="scientific">Pectobacterium atrosepticum (strain SCRI 1043 / ATCC BAA-672)</name>
    <name type="common">Erwinia carotovora subsp. atroseptica</name>
    <dbReference type="NCBI Taxonomy" id="218491"/>
    <lineage>
        <taxon>Bacteria</taxon>
        <taxon>Pseudomonadati</taxon>
        <taxon>Pseudomonadota</taxon>
        <taxon>Gammaproteobacteria</taxon>
        <taxon>Enterobacterales</taxon>
        <taxon>Pectobacteriaceae</taxon>
        <taxon>Pectobacterium</taxon>
    </lineage>
</organism>
<proteinExistence type="inferred from homology"/>
<dbReference type="EC" id="1.14.-.-" evidence="1"/>
<dbReference type="EMBL" id="BX950851">
    <property type="protein sequence ID" value="CAG74686.1"/>
    <property type="status" value="ALT_INIT"/>
    <property type="molecule type" value="Genomic_DNA"/>
</dbReference>
<dbReference type="RefSeq" id="WP_039295108.1">
    <property type="nucleotide sequence ID" value="NC_004547.2"/>
</dbReference>
<dbReference type="SMR" id="Q6D6A4"/>
<dbReference type="STRING" id="218491.ECA1781"/>
<dbReference type="KEGG" id="eca:ECA1781"/>
<dbReference type="PATRIC" id="fig|218491.5.peg.1808"/>
<dbReference type="eggNOG" id="COG1054">
    <property type="taxonomic scope" value="Bacteria"/>
</dbReference>
<dbReference type="HOGENOM" id="CLU_038878_1_1_6"/>
<dbReference type="OrthoDB" id="9778326at2"/>
<dbReference type="Proteomes" id="UP000007966">
    <property type="component" value="Chromosome"/>
</dbReference>
<dbReference type="GO" id="GO:0016705">
    <property type="term" value="F:oxidoreductase activity, acting on paired donors, with incorporation or reduction of molecular oxygen"/>
    <property type="evidence" value="ECO:0007669"/>
    <property type="project" value="UniProtKB-UniRule"/>
</dbReference>
<dbReference type="GO" id="GO:0006400">
    <property type="term" value="P:tRNA modification"/>
    <property type="evidence" value="ECO:0007669"/>
    <property type="project" value="UniProtKB-UniRule"/>
</dbReference>
<dbReference type="CDD" id="cd01518">
    <property type="entry name" value="RHOD_YceA"/>
    <property type="match status" value="1"/>
</dbReference>
<dbReference type="Gene3D" id="3.30.70.100">
    <property type="match status" value="1"/>
</dbReference>
<dbReference type="Gene3D" id="3.40.250.10">
    <property type="entry name" value="Rhodanese-like domain"/>
    <property type="match status" value="1"/>
</dbReference>
<dbReference type="HAMAP" id="MF_00469">
    <property type="entry name" value="TrhO"/>
    <property type="match status" value="1"/>
</dbReference>
<dbReference type="InterPro" id="IPR001763">
    <property type="entry name" value="Rhodanese-like_dom"/>
</dbReference>
<dbReference type="InterPro" id="IPR036873">
    <property type="entry name" value="Rhodanese-like_dom_sf"/>
</dbReference>
<dbReference type="InterPro" id="IPR022111">
    <property type="entry name" value="Rhodanese_C"/>
</dbReference>
<dbReference type="InterPro" id="IPR020936">
    <property type="entry name" value="TrhO"/>
</dbReference>
<dbReference type="InterPro" id="IPR040503">
    <property type="entry name" value="TRHO_N"/>
</dbReference>
<dbReference type="NCBIfam" id="NF001133">
    <property type="entry name" value="PRK00142.1-1"/>
    <property type="match status" value="1"/>
</dbReference>
<dbReference type="PANTHER" id="PTHR43846:SF1">
    <property type="entry name" value="TRNA URIDINE(34) HYDROXYLASE"/>
    <property type="match status" value="1"/>
</dbReference>
<dbReference type="PANTHER" id="PTHR43846">
    <property type="entry name" value="UPF0176 PROTEIN YCEA"/>
    <property type="match status" value="1"/>
</dbReference>
<dbReference type="Pfam" id="PF00581">
    <property type="entry name" value="Rhodanese"/>
    <property type="match status" value="1"/>
</dbReference>
<dbReference type="Pfam" id="PF12368">
    <property type="entry name" value="Rhodanese_C"/>
    <property type="match status" value="1"/>
</dbReference>
<dbReference type="Pfam" id="PF17773">
    <property type="entry name" value="UPF0176_N"/>
    <property type="match status" value="1"/>
</dbReference>
<dbReference type="SMART" id="SM00450">
    <property type="entry name" value="RHOD"/>
    <property type="match status" value="1"/>
</dbReference>
<dbReference type="SUPFAM" id="SSF52821">
    <property type="entry name" value="Rhodanese/Cell cycle control phosphatase"/>
    <property type="match status" value="1"/>
</dbReference>
<dbReference type="PROSITE" id="PS50206">
    <property type="entry name" value="RHODANESE_3"/>
    <property type="match status" value="1"/>
</dbReference>
<gene>
    <name evidence="1" type="primary">trhO</name>
    <name type="ordered locus">ECA1781</name>
</gene>
<name>TRHO_PECAS</name>
<accession>Q6D6A4</accession>
<feature type="chain" id="PRO_0000161476" description="tRNA uridine(34) hydroxylase">
    <location>
        <begin position="1"/>
        <end position="355"/>
    </location>
</feature>
<feature type="domain" description="Rhodanese" evidence="1">
    <location>
        <begin position="146"/>
        <end position="240"/>
    </location>
</feature>
<feature type="active site" description="Cysteine persulfide intermediate" evidence="1">
    <location>
        <position position="200"/>
    </location>
</feature>